<proteinExistence type="inferred from homology"/>
<keyword id="KW-0007">Acetylation</keyword>
<keyword id="KW-0520">NAD</keyword>
<keyword id="KW-0560">Oxidoreductase</keyword>
<keyword id="KW-1185">Reference proteome</keyword>
<dbReference type="EC" id="1.1.1.17" evidence="1"/>
<dbReference type="EMBL" id="CP001063">
    <property type="protein sequence ID" value="ACD08789.1"/>
    <property type="molecule type" value="Genomic_DNA"/>
</dbReference>
<dbReference type="RefSeq" id="WP_000645426.1">
    <property type="nucleotide sequence ID" value="NC_010658.1"/>
</dbReference>
<dbReference type="SMR" id="B2U5B1"/>
<dbReference type="STRING" id="344609.SbBS512_E4017"/>
<dbReference type="KEGG" id="sbc:SbBS512_E4017"/>
<dbReference type="HOGENOM" id="CLU_036089_2_0_6"/>
<dbReference type="Proteomes" id="UP000001030">
    <property type="component" value="Chromosome"/>
</dbReference>
<dbReference type="GO" id="GO:0005829">
    <property type="term" value="C:cytosol"/>
    <property type="evidence" value="ECO:0007669"/>
    <property type="project" value="TreeGrafter"/>
</dbReference>
<dbReference type="GO" id="GO:0008926">
    <property type="term" value="F:mannitol-1-phosphate 5-dehydrogenase activity"/>
    <property type="evidence" value="ECO:0007669"/>
    <property type="project" value="UniProtKB-UniRule"/>
</dbReference>
<dbReference type="GO" id="GO:0019592">
    <property type="term" value="P:mannitol catabolic process"/>
    <property type="evidence" value="ECO:0007669"/>
    <property type="project" value="TreeGrafter"/>
</dbReference>
<dbReference type="FunFam" id="1.10.1040.10:FF:000009">
    <property type="entry name" value="Mannitol-1-phosphate 5-dehydrogenase"/>
    <property type="match status" value="1"/>
</dbReference>
<dbReference type="FunFam" id="3.40.50.720:FF:000075">
    <property type="entry name" value="Mannitol-1-phosphate 5-dehydrogenase"/>
    <property type="match status" value="1"/>
</dbReference>
<dbReference type="Gene3D" id="1.10.1040.10">
    <property type="entry name" value="N-(1-d-carboxylethyl)-l-norvaline Dehydrogenase, domain 2"/>
    <property type="match status" value="1"/>
</dbReference>
<dbReference type="Gene3D" id="3.40.50.720">
    <property type="entry name" value="NAD(P)-binding Rossmann-like Domain"/>
    <property type="match status" value="1"/>
</dbReference>
<dbReference type="HAMAP" id="MF_00196">
    <property type="entry name" value="Mannitol_dehydrog"/>
    <property type="match status" value="1"/>
</dbReference>
<dbReference type="InterPro" id="IPR008927">
    <property type="entry name" value="6-PGluconate_DH-like_C_sf"/>
</dbReference>
<dbReference type="InterPro" id="IPR013328">
    <property type="entry name" value="6PGD_dom2"/>
</dbReference>
<dbReference type="InterPro" id="IPR023028">
    <property type="entry name" value="Mannitol_1_phos_5_DH"/>
</dbReference>
<dbReference type="InterPro" id="IPR000669">
    <property type="entry name" value="Mannitol_DH"/>
</dbReference>
<dbReference type="InterPro" id="IPR013118">
    <property type="entry name" value="Mannitol_DH_C"/>
</dbReference>
<dbReference type="InterPro" id="IPR023027">
    <property type="entry name" value="Mannitol_DH_CS"/>
</dbReference>
<dbReference type="InterPro" id="IPR013131">
    <property type="entry name" value="Mannitol_DH_N"/>
</dbReference>
<dbReference type="InterPro" id="IPR036291">
    <property type="entry name" value="NAD(P)-bd_dom_sf"/>
</dbReference>
<dbReference type="NCBIfam" id="NF002646">
    <property type="entry name" value="PRK02318.1-2"/>
    <property type="match status" value="1"/>
</dbReference>
<dbReference type="NCBIfam" id="NF002647">
    <property type="entry name" value="PRK02318.1-3"/>
    <property type="match status" value="1"/>
</dbReference>
<dbReference type="NCBIfam" id="NF002648">
    <property type="entry name" value="PRK02318.1-4"/>
    <property type="match status" value="1"/>
</dbReference>
<dbReference type="NCBIfam" id="NF002650">
    <property type="entry name" value="PRK02318.2-2"/>
    <property type="match status" value="1"/>
</dbReference>
<dbReference type="NCBIfam" id="NF002652">
    <property type="entry name" value="PRK02318.2-5"/>
    <property type="match status" value="1"/>
</dbReference>
<dbReference type="PANTHER" id="PTHR30524:SF0">
    <property type="entry name" value="ALTRONATE OXIDOREDUCTASE-RELATED"/>
    <property type="match status" value="1"/>
</dbReference>
<dbReference type="PANTHER" id="PTHR30524">
    <property type="entry name" value="MANNITOL-1-PHOSPHATE 5-DEHYDROGENASE"/>
    <property type="match status" value="1"/>
</dbReference>
<dbReference type="Pfam" id="PF01232">
    <property type="entry name" value="Mannitol_dh"/>
    <property type="match status" value="1"/>
</dbReference>
<dbReference type="Pfam" id="PF08125">
    <property type="entry name" value="Mannitol_dh_C"/>
    <property type="match status" value="1"/>
</dbReference>
<dbReference type="PRINTS" id="PR00084">
    <property type="entry name" value="MTLDHDRGNASE"/>
</dbReference>
<dbReference type="SUPFAM" id="SSF48179">
    <property type="entry name" value="6-phosphogluconate dehydrogenase C-terminal domain-like"/>
    <property type="match status" value="1"/>
</dbReference>
<dbReference type="SUPFAM" id="SSF51735">
    <property type="entry name" value="NAD(P)-binding Rossmann-fold domains"/>
    <property type="match status" value="1"/>
</dbReference>
<dbReference type="PROSITE" id="PS00974">
    <property type="entry name" value="MANNITOL_DHGENASE"/>
    <property type="match status" value="1"/>
</dbReference>
<reference key="1">
    <citation type="submission" date="2008-05" db="EMBL/GenBank/DDBJ databases">
        <title>Complete sequence of Shigella boydii serotype 18 strain BS512.</title>
        <authorList>
            <person name="Rasko D.A."/>
            <person name="Rosovitz M."/>
            <person name="Maurelli A.T."/>
            <person name="Myers G."/>
            <person name="Seshadri R."/>
            <person name="Cer R."/>
            <person name="Jiang L."/>
            <person name="Ravel J."/>
            <person name="Sebastian Y."/>
        </authorList>
    </citation>
    <scope>NUCLEOTIDE SEQUENCE [LARGE SCALE GENOMIC DNA]</scope>
    <source>
        <strain>CDC 3083-94 / BS512</strain>
    </source>
</reference>
<name>MTLD_SHIB3</name>
<organism>
    <name type="scientific">Shigella boydii serotype 18 (strain CDC 3083-94 / BS512)</name>
    <dbReference type="NCBI Taxonomy" id="344609"/>
    <lineage>
        <taxon>Bacteria</taxon>
        <taxon>Pseudomonadati</taxon>
        <taxon>Pseudomonadota</taxon>
        <taxon>Gammaproteobacteria</taxon>
        <taxon>Enterobacterales</taxon>
        <taxon>Enterobacteriaceae</taxon>
        <taxon>Shigella</taxon>
    </lineage>
</organism>
<gene>
    <name evidence="1" type="primary">mtlD</name>
    <name type="ordered locus">SbBS512_E4017</name>
</gene>
<feature type="chain" id="PRO_1000099203" description="Mannitol-1-phosphate 5-dehydrogenase">
    <location>
        <begin position="1"/>
        <end position="382"/>
    </location>
</feature>
<feature type="binding site" evidence="1">
    <location>
        <begin position="3"/>
        <end position="14"/>
    </location>
    <ligand>
        <name>NAD(+)</name>
        <dbReference type="ChEBI" id="CHEBI:57540"/>
    </ligand>
</feature>
<feature type="modified residue" description="N6-acetyllysine" evidence="1">
    <location>
        <position position="269"/>
    </location>
</feature>
<protein>
    <recommendedName>
        <fullName evidence="1">Mannitol-1-phosphate 5-dehydrogenase</fullName>
        <ecNumber evidence="1">1.1.1.17</ecNumber>
    </recommendedName>
</protein>
<accession>B2U5B1</accession>
<evidence type="ECO:0000255" key="1">
    <source>
        <dbReference type="HAMAP-Rule" id="MF_00196"/>
    </source>
</evidence>
<comment type="catalytic activity">
    <reaction evidence="1">
        <text>D-mannitol 1-phosphate + NAD(+) = beta-D-fructose 6-phosphate + NADH + H(+)</text>
        <dbReference type="Rhea" id="RHEA:19661"/>
        <dbReference type="ChEBI" id="CHEBI:15378"/>
        <dbReference type="ChEBI" id="CHEBI:57540"/>
        <dbReference type="ChEBI" id="CHEBI:57634"/>
        <dbReference type="ChEBI" id="CHEBI:57945"/>
        <dbReference type="ChEBI" id="CHEBI:61381"/>
        <dbReference type="EC" id="1.1.1.17"/>
    </reaction>
</comment>
<comment type="similarity">
    <text evidence="1">Belongs to the mannitol dehydrogenase family.</text>
</comment>
<sequence length="382" mass="41169">MKALHFGAGNIGRGFIGKLLADAGIQLTFADVNQVVLDALNARHSYQVHVVGETEQVDTVSGVNAVSSIGDDVVDLIAQVDLVTTAVGPVVLERIAPAIAKGLVKRKEQGNESPLNIIACENMVRGTTQLKGHVMNALPEDAKAWVEEHVGFVDSAVDRIVPPSASATNDPLEVTVETFSEWIVDKTQFKGALPNIPSMELTDNLMAFVERKLFTLNTGHAITAYLGKLAGHQTIRDAILDEKIRAVVKGAMEESGAVLIKRYGFDADKHAAYIQKILGRFENPYLKDDVERVGRQPLRKLSAGDRLIKPLLGTLEYSLPHKNLIQGIAGAMHFRSEDDPQAQELAALIADKGPQAALAQISGLDANSEVVSEAVTAYKAMQ</sequence>